<feature type="chain" id="PRO_0000255253" description="RING finger protein 151">
    <location>
        <begin position="1"/>
        <end position="240"/>
    </location>
</feature>
<feature type="zinc finger region" description="RING-type" evidence="1">
    <location>
        <begin position="20"/>
        <end position="58"/>
    </location>
</feature>
<feature type="zinc finger region" description="TRAF-type" evidence="2">
    <location>
        <begin position="101"/>
        <end position="156"/>
    </location>
</feature>
<sequence length="240" mass="27318">MSGGYDLNLFISPPDCNFLCSVCHGVLKRPVRLPCSHIFCKKCILRWLARQKTCPCCRKEVRHRKMVHVNKLQKIIGRLEVKCRNAEAGCQVTCPLAHRKGHQDSCPFELMVCPNEGCMLRVPRGALDEHRQNCQHGAYHRCSLGCGATLGPVERANHNCYRELREAWCQRQQRSRTLVLCLLQHMRKMHRTTGLIRRQLADFLEEDDPLLVGAPQEEAEATPEGSIGVEVWEPQGQATL</sequence>
<dbReference type="EMBL" id="BC109671">
    <property type="protein sequence ID" value="AAI09672.1"/>
    <property type="molecule type" value="mRNA"/>
</dbReference>
<dbReference type="RefSeq" id="NP_001070506.1">
    <property type="nucleotide sequence ID" value="NM_001077038.2"/>
</dbReference>
<dbReference type="SMR" id="Q2TBT8"/>
<dbReference type="FunCoup" id="Q2TBT8">
    <property type="interactions" value="2"/>
</dbReference>
<dbReference type="STRING" id="9913.ENSBTAP00000044518"/>
<dbReference type="PaxDb" id="9913-ENSBTAP00000044518"/>
<dbReference type="GeneID" id="767973"/>
<dbReference type="KEGG" id="bta:767973"/>
<dbReference type="CTD" id="146310"/>
<dbReference type="VEuPathDB" id="HostDB:ENSBTAG00000009536"/>
<dbReference type="eggNOG" id="KOG0297">
    <property type="taxonomic scope" value="Eukaryota"/>
</dbReference>
<dbReference type="HOGENOM" id="CLU_076732_3_0_1"/>
<dbReference type="InParanoid" id="Q2TBT8"/>
<dbReference type="OMA" id="RSACHHI"/>
<dbReference type="OrthoDB" id="9049620at2759"/>
<dbReference type="TreeFam" id="TF351947"/>
<dbReference type="Proteomes" id="UP000009136">
    <property type="component" value="Chromosome 25"/>
</dbReference>
<dbReference type="Bgee" id="ENSBTAG00000009536">
    <property type="expression patterns" value="Expressed in semen and 24 other cell types or tissues"/>
</dbReference>
<dbReference type="GO" id="GO:0004842">
    <property type="term" value="F:ubiquitin-protein transferase activity"/>
    <property type="evidence" value="ECO:0007669"/>
    <property type="project" value="InterPro"/>
</dbReference>
<dbReference type="GO" id="GO:0008270">
    <property type="term" value="F:zinc ion binding"/>
    <property type="evidence" value="ECO:0007669"/>
    <property type="project" value="UniProtKB-KW"/>
</dbReference>
<dbReference type="GO" id="GO:0016567">
    <property type="term" value="P:protein ubiquitination"/>
    <property type="evidence" value="ECO:0007669"/>
    <property type="project" value="InterPro"/>
</dbReference>
<dbReference type="Gene3D" id="3.30.40.10">
    <property type="entry name" value="Zinc/RING finger domain, C3HC4 (zinc finger)"/>
    <property type="match status" value="2"/>
</dbReference>
<dbReference type="InterPro" id="IPR003613">
    <property type="entry name" value="Ubox_domain"/>
</dbReference>
<dbReference type="InterPro" id="IPR001841">
    <property type="entry name" value="Znf_RING"/>
</dbReference>
<dbReference type="InterPro" id="IPR013083">
    <property type="entry name" value="Znf_RING/FYVE/PHD"/>
</dbReference>
<dbReference type="InterPro" id="IPR017907">
    <property type="entry name" value="Znf_RING_CS"/>
</dbReference>
<dbReference type="InterPro" id="IPR013010">
    <property type="entry name" value="Znf_SIAH"/>
</dbReference>
<dbReference type="InterPro" id="IPR001293">
    <property type="entry name" value="Znf_TRAF"/>
</dbReference>
<dbReference type="PANTHER" id="PTHR10131:SF157">
    <property type="entry name" value="RECEPTOR-ASSOCIATED FACTOR, PUTATIVE-RELATED"/>
    <property type="match status" value="1"/>
</dbReference>
<dbReference type="PANTHER" id="PTHR10131">
    <property type="entry name" value="TNF RECEPTOR ASSOCIATED FACTOR"/>
    <property type="match status" value="1"/>
</dbReference>
<dbReference type="Pfam" id="PF13923">
    <property type="entry name" value="zf-C3HC4_2"/>
    <property type="match status" value="1"/>
</dbReference>
<dbReference type="SMART" id="SM00184">
    <property type="entry name" value="RING"/>
    <property type="match status" value="1"/>
</dbReference>
<dbReference type="SMART" id="SM00504">
    <property type="entry name" value="Ubox"/>
    <property type="match status" value="1"/>
</dbReference>
<dbReference type="SUPFAM" id="SSF57850">
    <property type="entry name" value="RING/U-box"/>
    <property type="match status" value="1"/>
</dbReference>
<dbReference type="SUPFAM" id="SSF49599">
    <property type="entry name" value="TRAF domain-like"/>
    <property type="match status" value="1"/>
</dbReference>
<dbReference type="PROSITE" id="PS00518">
    <property type="entry name" value="ZF_RING_1"/>
    <property type="match status" value="1"/>
</dbReference>
<dbReference type="PROSITE" id="PS50089">
    <property type="entry name" value="ZF_RING_2"/>
    <property type="match status" value="1"/>
</dbReference>
<dbReference type="PROSITE" id="PS51081">
    <property type="entry name" value="ZF_SIAH"/>
    <property type="match status" value="1"/>
</dbReference>
<dbReference type="PROSITE" id="PS50145">
    <property type="entry name" value="ZF_TRAF"/>
    <property type="match status" value="1"/>
</dbReference>
<protein>
    <recommendedName>
        <fullName>RING finger protein 151</fullName>
    </recommendedName>
</protein>
<evidence type="ECO:0000255" key="1">
    <source>
        <dbReference type="PROSITE-ProRule" id="PRU00175"/>
    </source>
</evidence>
<evidence type="ECO:0000255" key="2">
    <source>
        <dbReference type="PROSITE-ProRule" id="PRU00207"/>
    </source>
</evidence>
<name>RN151_BOVIN</name>
<keyword id="KW-0479">Metal-binding</keyword>
<keyword id="KW-1185">Reference proteome</keyword>
<keyword id="KW-0862">Zinc</keyword>
<keyword id="KW-0863">Zinc-finger</keyword>
<accession>Q2TBT8</accession>
<gene>
    <name type="primary">RNF151</name>
</gene>
<proteinExistence type="evidence at transcript level"/>
<reference key="1">
    <citation type="submission" date="2005-11" db="EMBL/GenBank/DDBJ databases">
        <authorList>
            <consortium name="NIH - Mammalian Gene Collection (MGC) project"/>
        </authorList>
    </citation>
    <scope>NUCLEOTIDE SEQUENCE [LARGE SCALE MRNA]</scope>
    <source>
        <strain>Crossbred X Angus</strain>
        <tissue>Liver</tissue>
    </source>
</reference>
<organism>
    <name type="scientific">Bos taurus</name>
    <name type="common">Bovine</name>
    <dbReference type="NCBI Taxonomy" id="9913"/>
    <lineage>
        <taxon>Eukaryota</taxon>
        <taxon>Metazoa</taxon>
        <taxon>Chordata</taxon>
        <taxon>Craniata</taxon>
        <taxon>Vertebrata</taxon>
        <taxon>Euteleostomi</taxon>
        <taxon>Mammalia</taxon>
        <taxon>Eutheria</taxon>
        <taxon>Laurasiatheria</taxon>
        <taxon>Artiodactyla</taxon>
        <taxon>Ruminantia</taxon>
        <taxon>Pecora</taxon>
        <taxon>Bovidae</taxon>
        <taxon>Bovinae</taxon>
        <taxon>Bos</taxon>
    </lineage>
</organism>